<name>TMT1_YEAST</name>
<proteinExistence type="evidence at protein level"/>
<feature type="initiator methionine" description="Removed" evidence="8">
    <location>
        <position position="1"/>
    </location>
</feature>
<feature type="chain" id="PRO_0000202658" description="Trans-aconitate 3-methyltransferase">
    <location>
        <begin position="2"/>
        <end position="299"/>
    </location>
</feature>
<feature type="modified residue" description="N-acetylserine" evidence="8">
    <location>
        <position position="2"/>
    </location>
</feature>
<feature type="helix" evidence="9">
    <location>
        <begin position="2"/>
        <end position="5"/>
    </location>
</feature>
<feature type="helix" evidence="9">
    <location>
        <begin position="11"/>
        <end position="17"/>
    </location>
</feature>
<feature type="helix" evidence="9">
    <location>
        <begin position="23"/>
        <end position="32"/>
    </location>
</feature>
<feature type="strand" evidence="9">
    <location>
        <begin position="38"/>
        <end position="43"/>
    </location>
</feature>
<feature type="turn" evidence="9">
    <location>
        <begin position="46"/>
        <end position="48"/>
    </location>
</feature>
<feature type="helix" evidence="9">
    <location>
        <begin position="49"/>
        <end position="57"/>
    </location>
</feature>
<feature type="strand" evidence="9">
    <location>
        <begin position="62"/>
        <end position="69"/>
    </location>
</feature>
<feature type="helix" evidence="9">
    <location>
        <begin position="71"/>
        <end position="83"/>
    </location>
</feature>
<feature type="turn" evidence="9">
    <location>
        <begin position="85"/>
        <end position="90"/>
    </location>
</feature>
<feature type="strand" evidence="9">
    <location>
        <begin position="91"/>
        <end position="95"/>
    </location>
</feature>
<feature type="helix" evidence="9">
    <location>
        <begin position="102"/>
        <end position="104"/>
    </location>
</feature>
<feature type="turn" evidence="9">
    <location>
        <begin position="106"/>
        <end position="110"/>
    </location>
</feature>
<feature type="strand" evidence="9">
    <location>
        <begin position="114"/>
        <end position="121"/>
    </location>
</feature>
<feature type="helix" evidence="9">
    <location>
        <begin position="123"/>
        <end position="125"/>
    </location>
</feature>
<feature type="helix" evidence="9">
    <location>
        <begin position="128"/>
        <end position="138"/>
    </location>
</feature>
<feature type="strand" evidence="9">
    <location>
        <begin position="139"/>
        <end position="154"/>
    </location>
</feature>
<feature type="helix" evidence="9">
    <location>
        <begin position="159"/>
        <end position="161"/>
    </location>
</feature>
<feature type="helix" evidence="9">
    <location>
        <begin position="164"/>
        <end position="170"/>
    </location>
</feature>
<feature type="turn" evidence="9">
    <location>
        <begin position="172"/>
        <end position="175"/>
    </location>
</feature>
<feature type="helix" evidence="9">
    <location>
        <begin position="176"/>
        <end position="178"/>
    </location>
</feature>
<feature type="helix" evidence="9">
    <location>
        <begin position="183"/>
        <end position="188"/>
    </location>
</feature>
<feature type="turn" evidence="9">
    <location>
        <begin position="189"/>
        <end position="193"/>
    </location>
</feature>
<feature type="turn" evidence="9">
    <location>
        <begin position="198"/>
        <end position="200"/>
    </location>
</feature>
<feature type="strand" evidence="9">
    <location>
        <begin position="201"/>
        <end position="209"/>
    </location>
</feature>
<feature type="helix" evidence="9">
    <location>
        <begin position="211"/>
        <end position="215"/>
    </location>
</feature>
<feature type="helix" evidence="9">
    <location>
        <begin position="217"/>
        <end position="222"/>
    </location>
</feature>
<feature type="strand" evidence="9">
    <location>
        <begin position="231"/>
        <end position="234"/>
    </location>
</feature>
<feature type="helix" evidence="9">
    <location>
        <begin position="236"/>
        <end position="243"/>
    </location>
</feature>
<feature type="helix" evidence="9">
    <location>
        <begin position="247"/>
        <end position="254"/>
    </location>
</feature>
<feature type="helix" evidence="9">
    <location>
        <begin position="256"/>
        <end position="258"/>
    </location>
</feature>
<feature type="helix" evidence="9">
    <location>
        <begin position="264"/>
        <end position="275"/>
    </location>
</feature>
<feature type="strand" evidence="9">
    <location>
        <begin position="285"/>
        <end position="298"/>
    </location>
</feature>
<protein>
    <recommendedName>
        <fullName>Trans-aconitate 3-methyltransferase</fullName>
        <ecNumber evidence="1">2.1.1.145</ecNumber>
    </recommendedName>
</protein>
<organism>
    <name type="scientific">Saccharomyces cerevisiae (strain ATCC 204508 / S288c)</name>
    <name type="common">Baker's yeast</name>
    <dbReference type="NCBI Taxonomy" id="559292"/>
    <lineage>
        <taxon>Eukaryota</taxon>
        <taxon>Fungi</taxon>
        <taxon>Dikarya</taxon>
        <taxon>Ascomycota</taxon>
        <taxon>Saccharomycotina</taxon>
        <taxon>Saccharomycetes</taxon>
        <taxon>Saccharomycetales</taxon>
        <taxon>Saccharomycetaceae</taxon>
        <taxon>Saccharomyces</taxon>
    </lineage>
</organism>
<comment type="function">
    <text evidence="1 4 5">Catalyzes the S-adenosylmethionine monomethyl esterification of trans-aconitate and 3-isopropylmalate at high affinity and of other molecules like cis-aconitate, isocitrate, and citrate at lower velocities and affinities. The function of trans-aconitate methylation appears to be in reducing the toxicity of this spontaneous breakdown product of cis-aconitate. The role of 3-isopropylmalate methylation is unclear but may represent a metabolic branch at 3-isopropylmalate, where some of the material is taken in the pathway leading to leucine and some is taken in a pathway to the 3-isopropylmalate methyl ester, a molecule that provides a signal to switch from vegetative to invasive growth in response to amino acid starvation.</text>
</comment>
<comment type="catalytic activity">
    <reaction evidence="1">
        <text>trans-aconitate + S-adenosyl-L-methionine = (E)-2-(methoxycarbonylmethyl)but-2-enedioate + S-adenosyl-L-homocysteine</text>
        <dbReference type="Rhea" id="RHEA:22200"/>
        <dbReference type="ChEBI" id="CHEBI:15708"/>
        <dbReference type="ChEBI" id="CHEBI:57469"/>
        <dbReference type="ChEBI" id="CHEBI:57856"/>
        <dbReference type="ChEBI" id="CHEBI:59789"/>
        <dbReference type="EC" id="2.1.1.145"/>
    </reaction>
    <physiologicalReaction direction="left-to-right" evidence="7">
        <dbReference type="Rhea" id="RHEA:22201"/>
    </physiologicalReaction>
</comment>
<comment type="biophysicochemical properties">
    <kinetics>
        <KM evidence="1 4">660 uM for trans-aconitate</KM>
        <KM evidence="1 4">74000 uM for cis-aconitate</KM>
        <KM evidence="1 4">44000 uM for itaconate</KM>
        <KM evidence="1 4">323 uM for isopropylmaleate</KM>
        <KM evidence="1 4">1670 uM for isopropylfumarate</KM>
        <KM evidence="1 4">127 uM for (2R,3S)-3-isopropylmalate</KM>
        <KM evidence="1 4">341 uM for (2S,3R)-3-isopropylmalate</KM>
        <KM evidence="1 4">428 uM for (2R,3R)/(2S,3S)-3-isopropylmalate</KM>
        <KM evidence="1 4">19 uM for 2-(1-methylethylidine)succinate</KM>
        <KM evidence="1 4">45 uM for 3-butylmalate</KM>
        <Vmax evidence="1 4">44.8 nmol/min/mg enzyme with trans-aconitate as substrate</Vmax>
        <Vmax evidence="1 4">12.1 nmol/min/mg enzyme with cis-aconitate as substrate</Vmax>
        <Vmax evidence="1 4">26.9 nmol/min/mg enzyme with itaconate as substrate</Vmax>
        <Vmax evidence="1 4">39.7 nmol/min/mg enzyme with isopropylmaleate as substrate</Vmax>
        <Vmax evidence="1 4">2.4 nmol/min/mg enzyme with isopropylfumarate as substrate</Vmax>
        <Vmax evidence="1 4">59.2 nmol/min/mg enzyme with (2R,3S)-3-isopropylmalate as substrate</Vmax>
        <Vmax evidence="1 4">77.8 nmol/min/mg enzyme with (2S,3R)-3-isopropylmalate as substrate</Vmax>
        <Vmax evidence="1 4">4.4 nmol/min/mg enzyme with (2R,3R)/(2S,3S)-3-isopropylmalate as substrate</Vmax>
        <Vmax evidence="1 4">36.2 nmol/min/mg enzyme with 2-(1-methylethylidine)succinate as substrate</Vmax>
        <Vmax evidence="1 4">40.4 nmol/min/mg enzyme with 3-butylmalate as substrate</Vmax>
    </kinetics>
</comment>
<comment type="subcellular location">
    <subcellularLocation>
        <location evidence="2">Cytoplasm</location>
    </subcellularLocation>
</comment>
<comment type="induction">
    <text evidence="5">During amino acid starvation.</text>
</comment>
<comment type="miscellaneous">
    <text evidence="3">Present with 937 molecules/cell in log phase SD medium.</text>
</comment>
<comment type="similarity">
    <text evidence="6">Belongs to the methyltransferase superfamily. Tam family.</text>
</comment>
<sequence>MSTFSASDFNSERYSSSRPSYPSDFYKMIDEYHDGERKLLVDVGCGPGTATLQMAQELKPFEQIIGSDLSATMIKTAEVIKEGSPDTYKNVSFKISSSDDFKFLGADSVDKQKIDMITAVECAHWFDFEKFQRSAYANLRKDGTIAIWGYADPIFPDYPEFDDLMIEVPYGKQGLGPYWEQPGRSRLRNMLKDSHLDPELFHDIQVSYFCAEDVRDKVKLHQHTKKPLLIRKQVTLVEFADYVRTWSAYHQWKQDPKNKDKEDVADWFIKESLRRRPELSTNTKIEVVWNTFYKLGKRV</sequence>
<dbReference type="EC" id="2.1.1.145" evidence="1"/>
<dbReference type="EMBL" id="U18922">
    <property type="protein sequence ID" value="AAB64702.1"/>
    <property type="molecule type" value="Genomic_DNA"/>
</dbReference>
<dbReference type="EMBL" id="BK006939">
    <property type="protein sequence ID" value="DAA07837.1"/>
    <property type="molecule type" value="Genomic_DNA"/>
</dbReference>
<dbReference type="PIR" id="S30861">
    <property type="entry name" value="S30861"/>
</dbReference>
<dbReference type="RefSeq" id="NP_011102.3">
    <property type="nucleotide sequence ID" value="NM_001179065.3"/>
</dbReference>
<dbReference type="PDB" id="3G5T">
    <property type="method" value="X-ray"/>
    <property type="resolution" value="1.12 A"/>
    <property type="chains" value="A=2-299"/>
</dbReference>
<dbReference type="PDBsum" id="3G5T"/>
<dbReference type="SMR" id="P32643"/>
<dbReference type="BioGRID" id="36928">
    <property type="interactions" value="57"/>
</dbReference>
<dbReference type="DIP" id="DIP-4807N"/>
<dbReference type="FunCoup" id="P32643">
    <property type="interactions" value="908"/>
</dbReference>
<dbReference type="IntAct" id="P32643">
    <property type="interactions" value="4"/>
</dbReference>
<dbReference type="STRING" id="4932.YER175C"/>
<dbReference type="iPTMnet" id="P32643"/>
<dbReference type="PaxDb" id="4932-YER175C"/>
<dbReference type="PeptideAtlas" id="P32643"/>
<dbReference type="EnsemblFungi" id="YER175C_mRNA">
    <property type="protein sequence ID" value="YER175C"/>
    <property type="gene ID" value="YER175C"/>
</dbReference>
<dbReference type="GeneID" id="856922"/>
<dbReference type="KEGG" id="sce:YER175C"/>
<dbReference type="AGR" id="SGD:S000000977"/>
<dbReference type="SGD" id="S000000977">
    <property type="gene designation" value="TMT1"/>
</dbReference>
<dbReference type="VEuPathDB" id="FungiDB:YER175C"/>
<dbReference type="eggNOG" id="KOG3010">
    <property type="taxonomic scope" value="Eukaryota"/>
</dbReference>
<dbReference type="GeneTree" id="ENSGT00940000176672"/>
<dbReference type="HOGENOM" id="CLU_049344_1_2_1"/>
<dbReference type="InParanoid" id="P32643"/>
<dbReference type="OMA" id="RTWSAYH"/>
<dbReference type="OrthoDB" id="10027013at2759"/>
<dbReference type="BioCyc" id="MetaCyc:YER175C-MONOMER"/>
<dbReference type="BioCyc" id="YEAST:YER175C-MONOMER"/>
<dbReference type="SABIO-RK" id="P32643"/>
<dbReference type="BioGRID-ORCS" id="856922">
    <property type="hits" value="0 hits in 10 CRISPR screens"/>
</dbReference>
<dbReference type="EvolutionaryTrace" id="P32643"/>
<dbReference type="PRO" id="PR:P32643"/>
<dbReference type="Proteomes" id="UP000002311">
    <property type="component" value="Chromosome V"/>
</dbReference>
<dbReference type="RNAct" id="P32643">
    <property type="molecule type" value="protein"/>
</dbReference>
<dbReference type="GO" id="GO:0005829">
    <property type="term" value="C:cytosol"/>
    <property type="evidence" value="ECO:0000314"/>
    <property type="project" value="SGD"/>
</dbReference>
<dbReference type="GO" id="GO:0046547">
    <property type="term" value="F:trans-aconitate 3-methyltransferase activity"/>
    <property type="evidence" value="ECO:0000314"/>
    <property type="project" value="SGD"/>
</dbReference>
<dbReference type="GO" id="GO:0034198">
    <property type="term" value="P:cellular response to amino acid starvation"/>
    <property type="evidence" value="ECO:0000314"/>
    <property type="project" value="SGD"/>
</dbReference>
<dbReference type="GO" id="GO:0032259">
    <property type="term" value="P:methylation"/>
    <property type="evidence" value="ECO:0007669"/>
    <property type="project" value="UniProtKB-KW"/>
</dbReference>
<dbReference type="CDD" id="cd02440">
    <property type="entry name" value="AdoMet_MTases"/>
    <property type="match status" value="1"/>
</dbReference>
<dbReference type="FunFam" id="3.40.50.150:FF:000480">
    <property type="entry name" value="Trans-aconitate 3-methyltransferase"/>
    <property type="match status" value="1"/>
</dbReference>
<dbReference type="Gene3D" id="3.40.50.150">
    <property type="entry name" value="Vaccinia Virus protein VP39"/>
    <property type="match status" value="1"/>
</dbReference>
<dbReference type="InterPro" id="IPR051052">
    <property type="entry name" value="Diverse_substrate_MTase"/>
</dbReference>
<dbReference type="InterPro" id="IPR025714">
    <property type="entry name" value="Methyltranfer_dom"/>
</dbReference>
<dbReference type="InterPro" id="IPR029063">
    <property type="entry name" value="SAM-dependent_MTases_sf"/>
</dbReference>
<dbReference type="PANTHER" id="PTHR44942">
    <property type="entry name" value="METHYLTRANSF_11 DOMAIN-CONTAINING PROTEIN"/>
    <property type="match status" value="1"/>
</dbReference>
<dbReference type="PANTHER" id="PTHR44942:SF4">
    <property type="entry name" value="METHYLTRANSFERASE TYPE 11 DOMAIN-CONTAINING PROTEIN"/>
    <property type="match status" value="1"/>
</dbReference>
<dbReference type="Pfam" id="PF13847">
    <property type="entry name" value="Methyltransf_31"/>
    <property type="match status" value="1"/>
</dbReference>
<dbReference type="SUPFAM" id="SSF53335">
    <property type="entry name" value="S-adenosyl-L-methionine-dependent methyltransferases"/>
    <property type="match status" value="1"/>
</dbReference>
<reference key="1">
    <citation type="journal article" date="1997" name="Nature">
        <title>The nucleotide sequence of Saccharomyces cerevisiae chromosome V.</title>
        <authorList>
            <person name="Dietrich F.S."/>
            <person name="Mulligan J.T."/>
            <person name="Hennessy K.M."/>
            <person name="Yelton M.A."/>
            <person name="Allen E."/>
            <person name="Araujo R."/>
            <person name="Aviles E."/>
            <person name="Berno A."/>
            <person name="Brennan T."/>
            <person name="Carpenter J."/>
            <person name="Chen E."/>
            <person name="Cherry J.M."/>
            <person name="Chung E."/>
            <person name="Duncan M."/>
            <person name="Guzman E."/>
            <person name="Hartzell G."/>
            <person name="Hunicke-Smith S."/>
            <person name="Hyman R.W."/>
            <person name="Kayser A."/>
            <person name="Komp C."/>
            <person name="Lashkari D."/>
            <person name="Lew H."/>
            <person name="Lin D."/>
            <person name="Mosedale D."/>
            <person name="Nakahara K."/>
            <person name="Namath A."/>
            <person name="Norgren R."/>
            <person name="Oefner P."/>
            <person name="Oh C."/>
            <person name="Petel F.X."/>
            <person name="Roberts D."/>
            <person name="Sehl P."/>
            <person name="Schramm S."/>
            <person name="Shogren T."/>
            <person name="Smith V."/>
            <person name="Taylor P."/>
            <person name="Wei Y."/>
            <person name="Botstein D."/>
            <person name="Davis R.W."/>
        </authorList>
    </citation>
    <scope>NUCLEOTIDE SEQUENCE [LARGE SCALE GENOMIC DNA]</scope>
    <source>
        <strain>ATCC 204508 / S288c</strain>
    </source>
</reference>
<reference key="2">
    <citation type="journal article" date="2014" name="G3 (Bethesda)">
        <title>The reference genome sequence of Saccharomyces cerevisiae: Then and now.</title>
        <authorList>
            <person name="Engel S.R."/>
            <person name="Dietrich F.S."/>
            <person name="Fisk D.G."/>
            <person name="Binkley G."/>
            <person name="Balakrishnan R."/>
            <person name="Costanzo M.C."/>
            <person name="Dwight S.S."/>
            <person name="Hitz B.C."/>
            <person name="Karra K."/>
            <person name="Nash R.S."/>
            <person name="Weng S."/>
            <person name="Wong E.D."/>
            <person name="Lloyd P."/>
            <person name="Skrzypek M.S."/>
            <person name="Miyasato S.R."/>
            <person name="Simison M."/>
            <person name="Cherry J.M."/>
        </authorList>
    </citation>
    <scope>GENOME REANNOTATION</scope>
    <source>
        <strain>ATCC 204508 / S288c</strain>
    </source>
</reference>
<reference key="3">
    <citation type="journal article" date="2001" name="Biochemistry">
        <title>Identification of the gene and characterization of the activity of the trans-aconitate methyltransferase from Saccharomyces cerevisiae.</title>
        <authorList>
            <person name="Cai H."/>
            <person name="Dumlao D.S."/>
            <person name="Katz J.E."/>
            <person name="Clarke S."/>
        </authorList>
    </citation>
    <scope>FUNCTION</scope>
    <scope>CATALYTIC ACTIVITY</scope>
    <scope>BIOPHYSICOCHEMICAL PROPERTIES</scope>
</reference>
<reference key="4">
    <citation type="journal article" date="2003" name="Nature">
        <title>Global analysis of protein localization in budding yeast.</title>
        <authorList>
            <person name="Huh W.-K."/>
            <person name="Falvo J.V."/>
            <person name="Gerke L.C."/>
            <person name="Carroll A.S."/>
            <person name="Howson R.W."/>
            <person name="Weissman J.S."/>
            <person name="O'Shea E.K."/>
        </authorList>
    </citation>
    <scope>SUBCELLULAR LOCATION [LARGE SCALE ANALYSIS]</scope>
</reference>
<reference key="5">
    <citation type="journal article" date="2003" name="Nature">
        <title>Global analysis of protein expression in yeast.</title>
        <authorList>
            <person name="Ghaemmaghami S."/>
            <person name="Huh W.-K."/>
            <person name="Bower K."/>
            <person name="Howson R.W."/>
            <person name="Belle A."/>
            <person name="Dephoure N."/>
            <person name="O'Shea E.K."/>
            <person name="Weissman J.S."/>
        </authorList>
    </citation>
    <scope>LEVEL OF PROTEIN EXPRESSION [LARGE SCALE ANALYSIS]</scope>
</reference>
<reference key="6">
    <citation type="journal article" date="2004" name="Biochemistry">
        <title>3-isopropylmalate is the major endogenous substrate of the Saccharomyces cerevisiae trans-aconitate methyltransferase.</title>
        <authorList>
            <person name="Katz J.E."/>
            <person name="Dumlao D.S."/>
            <person name="Wasserman J.I."/>
            <person name="Lansdown M.G."/>
            <person name="Jung M.E."/>
            <person name="Faull K.F."/>
            <person name="Clarke S."/>
        </authorList>
    </citation>
    <scope>FUNCTION</scope>
    <scope>BIOPHYSICOCHEMICAL PROPERTIES</scope>
</reference>
<reference key="7">
    <citation type="journal article" date="2008" name="Biochemistry">
        <title>Secreted 3-isopropylmalate methyl ester signals invasive growth during amino acid starvation in Saccharomyces cerevisiae.</title>
        <authorList>
            <person name="Dumlao D.S."/>
            <person name="Hertz N."/>
            <person name="Clarke S."/>
        </authorList>
    </citation>
    <scope>FUNCTION</scope>
    <scope>INDUCTION</scope>
</reference>
<reference key="8">
    <citation type="journal article" date="2008" name="Mol. Cell. Proteomics">
        <title>A multidimensional chromatography technology for in-depth phosphoproteome analysis.</title>
        <authorList>
            <person name="Albuquerque C.P."/>
            <person name="Smolka M.B."/>
            <person name="Payne S.H."/>
            <person name="Bafna V."/>
            <person name="Eng J."/>
            <person name="Zhou H."/>
        </authorList>
    </citation>
    <scope>IDENTIFICATION BY MASS SPECTROMETRY [LARGE SCALE ANALYSIS]</scope>
</reference>
<reference key="9">
    <citation type="journal article" date="2012" name="Proc. Natl. Acad. Sci. U.S.A.">
        <title>N-terminal acetylome analyses and functional insights of the N-terminal acetyltransferase NatB.</title>
        <authorList>
            <person name="Van Damme P."/>
            <person name="Lasa M."/>
            <person name="Polevoda B."/>
            <person name="Gazquez C."/>
            <person name="Elosegui-Artola A."/>
            <person name="Kim D.S."/>
            <person name="De Juan-Pardo E."/>
            <person name="Demeyer K."/>
            <person name="Hole K."/>
            <person name="Larrea E."/>
            <person name="Timmerman E."/>
            <person name="Prieto J."/>
            <person name="Arnesen T."/>
            <person name="Sherman F."/>
            <person name="Gevaert K."/>
            <person name="Aldabe R."/>
        </authorList>
    </citation>
    <scope>ACETYLATION [LARGE SCALE ANALYSIS] AT SER-2</scope>
    <scope>CLEAVAGE OF INITIATOR METHIONINE [LARGE SCALE ANALYSIS]</scope>
    <scope>IDENTIFICATION BY MASS SPECTROMETRY [LARGE SCALE ANALYSIS]</scope>
</reference>
<evidence type="ECO:0000269" key="1">
    <source>
    </source>
</evidence>
<evidence type="ECO:0000269" key="2">
    <source>
    </source>
</evidence>
<evidence type="ECO:0000269" key="3">
    <source>
    </source>
</evidence>
<evidence type="ECO:0000269" key="4">
    <source>
    </source>
</evidence>
<evidence type="ECO:0000269" key="5">
    <source>
    </source>
</evidence>
<evidence type="ECO:0000305" key="6"/>
<evidence type="ECO:0000305" key="7">
    <source>
    </source>
</evidence>
<evidence type="ECO:0007744" key="8">
    <source>
    </source>
</evidence>
<evidence type="ECO:0007829" key="9">
    <source>
        <dbReference type="PDB" id="3G5T"/>
    </source>
</evidence>
<accession>P32643</accession>
<accession>D3DM83</accession>
<keyword id="KW-0002">3D-structure</keyword>
<keyword id="KW-0007">Acetylation</keyword>
<keyword id="KW-0963">Cytoplasm</keyword>
<keyword id="KW-0489">Methyltransferase</keyword>
<keyword id="KW-1185">Reference proteome</keyword>
<keyword id="KW-0949">S-adenosyl-L-methionine</keyword>
<keyword id="KW-0808">Transferase</keyword>
<gene>
    <name type="primary">TMT1</name>
    <name type="synonym">TAM1</name>
    <name type="ordered locus">YER175C</name>
    <name type="ORF">SYGP-ORF63</name>
</gene>